<reference key="1">
    <citation type="journal article" date="2005" name="Nature">
        <title>The genome of the social amoeba Dictyostelium discoideum.</title>
        <authorList>
            <person name="Eichinger L."/>
            <person name="Pachebat J.A."/>
            <person name="Gloeckner G."/>
            <person name="Rajandream M.A."/>
            <person name="Sucgang R."/>
            <person name="Berriman M."/>
            <person name="Song J."/>
            <person name="Olsen R."/>
            <person name="Szafranski K."/>
            <person name="Xu Q."/>
            <person name="Tunggal B."/>
            <person name="Kummerfeld S."/>
            <person name="Madera M."/>
            <person name="Konfortov B.A."/>
            <person name="Rivero F."/>
            <person name="Bankier A.T."/>
            <person name="Lehmann R."/>
            <person name="Hamlin N."/>
            <person name="Davies R."/>
            <person name="Gaudet P."/>
            <person name="Fey P."/>
            <person name="Pilcher K."/>
            <person name="Chen G."/>
            <person name="Saunders D."/>
            <person name="Sodergren E.J."/>
            <person name="Davis P."/>
            <person name="Kerhornou A."/>
            <person name="Nie X."/>
            <person name="Hall N."/>
            <person name="Anjard C."/>
            <person name="Hemphill L."/>
            <person name="Bason N."/>
            <person name="Farbrother P."/>
            <person name="Desany B."/>
            <person name="Just E."/>
            <person name="Morio T."/>
            <person name="Rost R."/>
            <person name="Churcher C.M."/>
            <person name="Cooper J."/>
            <person name="Haydock S."/>
            <person name="van Driessche N."/>
            <person name="Cronin A."/>
            <person name="Goodhead I."/>
            <person name="Muzny D.M."/>
            <person name="Mourier T."/>
            <person name="Pain A."/>
            <person name="Lu M."/>
            <person name="Harper D."/>
            <person name="Lindsay R."/>
            <person name="Hauser H."/>
            <person name="James K.D."/>
            <person name="Quiles M."/>
            <person name="Madan Babu M."/>
            <person name="Saito T."/>
            <person name="Buchrieser C."/>
            <person name="Wardroper A."/>
            <person name="Felder M."/>
            <person name="Thangavelu M."/>
            <person name="Johnson D."/>
            <person name="Knights A."/>
            <person name="Loulseged H."/>
            <person name="Mungall K.L."/>
            <person name="Oliver K."/>
            <person name="Price C."/>
            <person name="Quail M.A."/>
            <person name="Urushihara H."/>
            <person name="Hernandez J."/>
            <person name="Rabbinowitsch E."/>
            <person name="Steffen D."/>
            <person name="Sanders M."/>
            <person name="Ma J."/>
            <person name="Kohara Y."/>
            <person name="Sharp S."/>
            <person name="Simmonds M.N."/>
            <person name="Spiegler S."/>
            <person name="Tivey A."/>
            <person name="Sugano S."/>
            <person name="White B."/>
            <person name="Walker D."/>
            <person name="Woodward J.R."/>
            <person name="Winckler T."/>
            <person name="Tanaka Y."/>
            <person name="Shaulsky G."/>
            <person name="Schleicher M."/>
            <person name="Weinstock G.M."/>
            <person name="Rosenthal A."/>
            <person name="Cox E.C."/>
            <person name="Chisholm R.L."/>
            <person name="Gibbs R.A."/>
            <person name="Loomis W.F."/>
            <person name="Platzer M."/>
            <person name="Kay R.R."/>
            <person name="Williams J.G."/>
            <person name="Dear P.H."/>
            <person name="Noegel A.A."/>
            <person name="Barrell B.G."/>
            <person name="Kuspa A."/>
        </authorList>
    </citation>
    <scope>NUCLEOTIDE SEQUENCE [LARGE SCALE GENOMIC DNA]</scope>
    <source>
        <strain>AX4</strain>
    </source>
</reference>
<sequence length="270" mass="30419">MGKSSKDKRDIYYRKAKEEGWRARSAFKLIQIDEEYQIFEGVKRVVDLCAAPGSWSQVLSRRIYGDGKDPDVKIVAVDLQEMAPLKGVVQIKGDITKYETSKQIISHFDGSLADLIISDGAPDVTGLHDIDFYGQSQLILSALNITTHTLKIGGTFVAKMFKGDDMSLMYSQMKLFFEHVSFVKPSSSRESSLENFILCRNYQPPLNYNPKIIDPALENHNKILNNNNNNSNNNNNCNIDNENDNEFLKTDSLIVPFIACGDLNLGYHLV</sequence>
<organism>
    <name type="scientific">Dictyostelium discoideum</name>
    <name type="common">Social amoeba</name>
    <dbReference type="NCBI Taxonomy" id="44689"/>
    <lineage>
        <taxon>Eukaryota</taxon>
        <taxon>Amoebozoa</taxon>
        <taxon>Evosea</taxon>
        <taxon>Eumycetozoa</taxon>
        <taxon>Dictyostelia</taxon>
        <taxon>Dictyosteliales</taxon>
        <taxon>Dictyosteliaceae</taxon>
        <taxon>Dictyostelium</taxon>
    </lineage>
</organism>
<dbReference type="EC" id="2.1.1.205" evidence="1"/>
<dbReference type="EMBL" id="AAFI02000036">
    <property type="protein sequence ID" value="EAL67220.1"/>
    <property type="molecule type" value="Genomic_DNA"/>
</dbReference>
<dbReference type="RefSeq" id="XP_641201.1">
    <property type="nucleotide sequence ID" value="XM_636109.1"/>
</dbReference>
<dbReference type="SMR" id="Q54VA8"/>
<dbReference type="FunCoup" id="Q54VA8">
    <property type="interactions" value="859"/>
</dbReference>
<dbReference type="STRING" id="44689.Q54VA8"/>
<dbReference type="PaxDb" id="44689-DDB0233120"/>
<dbReference type="EnsemblProtists" id="EAL67220">
    <property type="protein sequence ID" value="EAL67220"/>
    <property type="gene ID" value="DDB_G0280483"/>
</dbReference>
<dbReference type="GeneID" id="8622582"/>
<dbReference type="KEGG" id="ddi:DDB_G0280483"/>
<dbReference type="dictyBase" id="DDB_G0280483">
    <property type="gene designation" value="fsjA"/>
</dbReference>
<dbReference type="VEuPathDB" id="AmoebaDB:DDB_G0280483"/>
<dbReference type="eggNOG" id="KOG1099">
    <property type="taxonomic scope" value="Eukaryota"/>
</dbReference>
<dbReference type="HOGENOM" id="CLU_009422_1_2_1"/>
<dbReference type="InParanoid" id="Q54VA8"/>
<dbReference type="OMA" id="FIVCLNF"/>
<dbReference type="PhylomeDB" id="Q54VA8"/>
<dbReference type="PRO" id="PR:Q54VA8"/>
<dbReference type="Proteomes" id="UP000002195">
    <property type="component" value="Chromosome 3"/>
</dbReference>
<dbReference type="GO" id="GO:0005737">
    <property type="term" value="C:cytoplasm"/>
    <property type="evidence" value="ECO:0000318"/>
    <property type="project" value="GO_Central"/>
</dbReference>
<dbReference type="GO" id="GO:0005829">
    <property type="term" value="C:cytosol"/>
    <property type="evidence" value="ECO:0000250"/>
    <property type="project" value="UniProtKB"/>
</dbReference>
<dbReference type="GO" id="GO:1904047">
    <property type="term" value="F:S-adenosyl-L-methionine binding"/>
    <property type="evidence" value="ECO:0000250"/>
    <property type="project" value="UniProtKB"/>
</dbReference>
<dbReference type="GO" id="GO:0106340">
    <property type="term" value="F:tRNA (cytidine(32)/guanosine(34)-2'-O)-methyltransferase activity"/>
    <property type="evidence" value="ECO:0000250"/>
    <property type="project" value="UniProtKB"/>
</dbReference>
<dbReference type="GO" id="GO:0016423">
    <property type="term" value="F:tRNA (guanine) methyltransferase activity"/>
    <property type="evidence" value="ECO:0000250"/>
    <property type="project" value="UniProtKB"/>
</dbReference>
<dbReference type="GO" id="GO:0008175">
    <property type="term" value="F:tRNA methyltransferase activity"/>
    <property type="evidence" value="ECO:0000318"/>
    <property type="project" value="GO_Central"/>
</dbReference>
<dbReference type="GO" id="GO:0002181">
    <property type="term" value="P:cytoplasmic translation"/>
    <property type="evidence" value="ECO:0000250"/>
    <property type="project" value="UniProtKB"/>
</dbReference>
<dbReference type="GO" id="GO:0022008">
    <property type="term" value="P:neurogenesis"/>
    <property type="evidence" value="ECO:0000250"/>
    <property type="project" value="UniProtKB"/>
</dbReference>
<dbReference type="GO" id="GO:0030488">
    <property type="term" value="P:tRNA methylation"/>
    <property type="evidence" value="ECO:0000318"/>
    <property type="project" value="GO_Central"/>
</dbReference>
<dbReference type="GO" id="GO:0002128">
    <property type="term" value="P:tRNA nucleoside ribose methylation"/>
    <property type="evidence" value="ECO:0000250"/>
    <property type="project" value="UniProtKB"/>
</dbReference>
<dbReference type="GO" id="GO:0002130">
    <property type="term" value="P:wobble position ribose methylation"/>
    <property type="evidence" value="ECO:0000250"/>
    <property type="project" value="UniProtKB"/>
</dbReference>
<dbReference type="FunFam" id="3.40.50.150:FF:000040">
    <property type="entry name" value="Putative ribosomal RNA methyltransferase 1"/>
    <property type="match status" value="1"/>
</dbReference>
<dbReference type="Gene3D" id="3.40.50.150">
    <property type="entry name" value="Vaccinia Virus protein VP39"/>
    <property type="match status" value="1"/>
</dbReference>
<dbReference type="HAMAP" id="MF_01547">
    <property type="entry name" value="RNA_methyltr_E"/>
    <property type="match status" value="1"/>
</dbReference>
<dbReference type="HAMAP" id="MF_03162">
    <property type="entry name" value="RNA_methyltr_E_TRM7"/>
    <property type="match status" value="1"/>
</dbReference>
<dbReference type="InterPro" id="IPR028590">
    <property type="entry name" value="RNA_methyltr_E_TRM7"/>
</dbReference>
<dbReference type="InterPro" id="IPR050082">
    <property type="entry name" value="RNA_methyltr_RlmE"/>
</dbReference>
<dbReference type="InterPro" id="IPR002877">
    <property type="entry name" value="RNA_MeTrfase_FtsJ_dom"/>
</dbReference>
<dbReference type="InterPro" id="IPR015507">
    <property type="entry name" value="rRNA-MeTfrase_E"/>
</dbReference>
<dbReference type="InterPro" id="IPR029063">
    <property type="entry name" value="SAM-dependent_MTases_sf"/>
</dbReference>
<dbReference type="PANTHER" id="PTHR10920">
    <property type="entry name" value="RIBOSOMAL RNA METHYLTRANSFERASE"/>
    <property type="match status" value="1"/>
</dbReference>
<dbReference type="PANTHER" id="PTHR10920:SF12">
    <property type="entry name" value="TRNA (CYTIDINE(32)_GUANOSINE(34)-2'-O)-METHYLTRANSFERASE-RELATED"/>
    <property type="match status" value="1"/>
</dbReference>
<dbReference type="Pfam" id="PF01728">
    <property type="entry name" value="FtsJ"/>
    <property type="match status" value="1"/>
</dbReference>
<dbReference type="SUPFAM" id="SSF53335">
    <property type="entry name" value="S-adenosyl-L-methionine-dependent methyltransferases"/>
    <property type="match status" value="1"/>
</dbReference>
<gene>
    <name type="primary">fsjA</name>
    <name type="synonym">ftsj1</name>
    <name type="ORF">DDB_G0280483</name>
</gene>
<proteinExistence type="inferred from homology"/>
<name>TRM7_DICDI</name>
<comment type="function">
    <text evidence="1">Methylates the 2'-O-ribose of nucleotides at positions 32 and 34 of the tRNA anticodon loop of substrate tRNAs.</text>
</comment>
<comment type="catalytic activity">
    <reaction evidence="1">
        <text>cytidine(32)/guanosine(34) in tRNA + 2 S-adenosyl-L-methionine = 2'-O-methylcytidine(32)/2'-O-methylguanosine(34) in tRNA + 2 S-adenosyl-L-homocysteine + 2 H(+)</text>
        <dbReference type="Rhea" id="RHEA:42396"/>
        <dbReference type="Rhea" id="RHEA-COMP:10246"/>
        <dbReference type="Rhea" id="RHEA-COMP:10247"/>
        <dbReference type="ChEBI" id="CHEBI:15378"/>
        <dbReference type="ChEBI" id="CHEBI:57856"/>
        <dbReference type="ChEBI" id="CHEBI:59789"/>
        <dbReference type="ChEBI" id="CHEBI:74269"/>
        <dbReference type="ChEBI" id="CHEBI:74445"/>
        <dbReference type="ChEBI" id="CHEBI:74495"/>
        <dbReference type="ChEBI" id="CHEBI:82748"/>
        <dbReference type="EC" id="2.1.1.205"/>
    </reaction>
</comment>
<comment type="subcellular location">
    <subcellularLocation>
        <location evidence="1">Cytoplasm</location>
    </subcellularLocation>
</comment>
<comment type="similarity">
    <text evidence="1">Belongs to the class I-like SAM-binding methyltransferase superfamily. RNA methyltransferase RlmE family. TRM7 subfamily.</text>
</comment>
<keyword id="KW-0963">Cytoplasm</keyword>
<keyword id="KW-0489">Methyltransferase</keyword>
<keyword id="KW-1185">Reference proteome</keyword>
<keyword id="KW-0949">S-adenosyl-L-methionine</keyword>
<keyword id="KW-0808">Transferase</keyword>
<keyword id="KW-0819">tRNA processing</keyword>
<protein>
    <recommendedName>
        <fullName evidence="1">Putative tRNA (cytidine(32)/guanosine(34)-2'-O)-methyltransferase</fullName>
        <ecNumber evidence="1">2.1.1.205</ecNumber>
    </recommendedName>
    <alternativeName>
        <fullName evidence="1">2'-O-ribose RNA methyltransferase TRM7 homolog</fullName>
    </alternativeName>
</protein>
<accession>Q54VA8</accession>
<feature type="chain" id="PRO_0000330906" description="Putative tRNA (cytidine(32)/guanosine(34)-2'-O)-methyltransferase">
    <location>
        <begin position="1"/>
        <end position="270"/>
    </location>
</feature>
<feature type="active site" description="Proton acceptor" evidence="1">
    <location>
        <position position="159"/>
    </location>
</feature>
<feature type="binding site" evidence="1">
    <location>
        <position position="53"/>
    </location>
    <ligand>
        <name>S-adenosyl-L-methionine</name>
        <dbReference type="ChEBI" id="CHEBI:59789"/>
    </ligand>
</feature>
<feature type="binding site" evidence="1">
    <location>
        <position position="55"/>
    </location>
    <ligand>
        <name>S-adenosyl-L-methionine</name>
        <dbReference type="ChEBI" id="CHEBI:59789"/>
    </ligand>
</feature>
<feature type="binding site" evidence="1">
    <location>
        <position position="78"/>
    </location>
    <ligand>
        <name>S-adenosyl-L-methionine</name>
        <dbReference type="ChEBI" id="CHEBI:59789"/>
    </ligand>
</feature>
<feature type="binding site" evidence="1">
    <location>
        <position position="94"/>
    </location>
    <ligand>
        <name>S-adenosyl-L-methionine</name>
        <dbReference type="ChEBI" id="CHEBI:59789"/>
    </ligand>
</feature>
<feature type="binding site" evidence="1">
    <location>
        <position position="119"/>
    </location>
    <ligand>
        <name>S-adenosyl-L-methionine</name>
        <dbReference type="ChEBI" id="CHEBI:59789"/>
    </ligand>
</feature>
<evidence type="ECO:0000255" key="1">
    <source>
        <dbReference type="HAMAP-Rule" id="MF_03162"/>
    </source>
</evidence>